<evidence type="ECO:0000255" key="1">
    <source>
        <dbReference type="HAMAP-Rule" id="MF_00652"/>
    </source>
</evidence>
<name>Y3890_BORBR</name>
<feature type="chain" id="PRO_0000203975" description="UPF0246 protein BB3890">
    <location>
        <begin position="1"/>
        <end position="257"/>
    </location>
</feature>
<comment type="similarity">
    <text evidence="1">Belongs to the UPF0246 family.</text>
</comment>
<organism>
    <name type="scientific">Bordetella bronchiseptica (strain ATCC BAA-588 / NCTC 13252 / RB50)</name>
    <name type="common">Alcaligenes bronchisepticus</name>
    <dbReference type="NCBI Taxonomy" id="257310"/>
    <lineage>
        <taxon>Bacteria</taxon>
        <taxon>Pseudomonadati</taxon>
        <taxon>Pseudomonadota</taxon>
        <taxon>Betaproteobacteria</taxon>
        <taxon>Burkholderiales</taxon>
        <taxon>Alcaligenaceae</taxon>
        <taxon>Bordetella</taxon>
    </lineage>
</organism>
<gene>
    <name type="ordered locus">BB3890</name>
</gene>
<protein>
    <recommendedName>
        <fullName evidence="1">UPF0246 protein BB3890</fullName>
    </recommendedName>
</protein>
<dbReference type="EMBL" id="BX640448">
    <property type="protein sequence ID" value="CAE35864.1"/>
    <property type="molecule type" value="Genomic_DNA"/>
</dbReference>
<dbReference type="SMR" id="Q7WCP1"/>
<dbReference type="KEGG" id="bbr:BB3890"/>
<dbReference type="eggNOG" id="COG3022">
    <property type="taxonomic scope" value="Bacteria"/>
</dbReference>
<dbReference type="HOGENOM" id="CLU_061989_0_0_4"/>
<dbReference type="Proteomes" id="UP000001027">
    <property type="component" value="Chromosome"/>
</dbReference>
<dbReference type="GO" id="GO:0005829">
    <property type="term" value="C:cytosol"/>
    <property type="evidence" value="ECO:0007669"/>
    <property type="project" value="TreeGrafter"/>
</dbReference>
<dbReference type="GO" id="GO:0033194">
    <property type="term" value="P:response to hydroperoxide"/>
    <property type="evidence" value="ECO:0007669"/>
    <property type="project" value="TreeGrafter"/>
</dbReference>
<dbReference type="HAMAP" id="MF_00652">
    <property type="entry name" value="UPF0246"/>
    <property type="match status" value="1"/>
</dbReference>
<dbReference type="InterPro" id="IPR005583">
    <property type="entry name" value="YaaA"/>
</dbReference>
<dbReference type="NCBIfam" id="NF002542">
    <property type="entry name" value="PRK02101.1-3"/>
    <property type="match status" value="1"/>
</dbReference>
<dbReference type="PANTHER" id="PTHR30283:SF4">
    <property type="entry name" value="PEROXIDE STRESS RESISTANCE PROTEIN YAAA"/>
    <property type="match status" value="1"/>
</dbReference>
<dbReference type="PANTHER" id="PTHR30283">
    <property type="entry name" value="PEROXIDE STRESS RESPONSE PROTEIN YAAA"/>
    <property type="match status" value="1"/>
</dbReference>
<dbReference type="Pfam" id="PF03883">
    <property type="entry name" value="H2O2_YaaD"/>
    <property type="match status" value="1"/>
</dbReference>
<accession>Q7WCP1</accession>
<sequence length="257" mass="28650">MLFLLSPAKKLDYDSPVHVETHTQPLFVDQAAALIKVLKTKSADEIAELMSLSPALAELNAGRYGAWKRSFTQANSRQAVLAFNGDVYEGLQADTLSARQLDWAQDHVVILSGLYGALRPLDLMQPYRLEMGTRLHTPKGKNLYEYWGSGIAEYLNERQAGAKAPVIVNLASEEYFKVVDLKTLKARVVQCVFQDWKNGAWKVISFHAKRARGLMARYAIAHKVARPEGLQGFDSEGYAYDAAASSADKLVFRRKQA</sequence>
<reference key="1">
    <citation type="journal article" date="2003" name="Nat. Genet.">
        <title>Comparative analysis of the genome sequences of Bordetella pertussis, Bordetella parapertussis and Bordetella bronchiseptica.</title>
        <authorList>
            <person name="Parkhill J."/>
            <person name="Sebaihia M."/>
            <person name="Preston A."/>
            <person name="Murphy L.D."/>
            <person name="Thomson N.R."/>
            <person name="Harris D.E."/>
            <person name="Holden M.T.G."/>
            <person name="Churcher C.M."/>
            <person name="Bentley S.D."/>
            <person name="Mungall K.L."/>
            <person name="Cerdeno-Tarraga A.-M."/>
            <person name="Temple L."/>
            <person name="James K.D."/>
            <person name="Harris B."/>
            <person name="Quail M.A."/>
            <person name="Achtman M."/>
            <person name="Atkin R."/>
            <person name="Baker S."/>
            <person name="Basham D."/>
            <person name="Bason N."/>
            <person name="Cherevach I."/>
            <person name="Chillingworth T."/>
            <person name="Collins M."/>
            <person name="Cronin A."/>
            <person name="Davis P."/>
            <person name="Doggett J."/>
            <person name="Feltwell T."/>
            <person name="Goble A."/>
            <person name="Hamlin N."/>
            <person name="Hauser H."/>
            <person name="Holroyd S."/>
            <person name="Jagels K."/>
            <person name="Leather S."/>
            <person name="Moule S."/>
            <person name="Norberczak H."/>
            <person name="O'Neil S."/>
            <person name="Ormond D."/>
            <person name="Price C."/>
            <person name="Rabbinowitsch E."/>
            <person name="Rutter S."/>
            <person name="Sanders M."/>
            <person name="Saunders D."/>
            <person name="Seeger K."/>
            <person name="Sharp S."/>
            <person name="Simmonds M."/>
            <person name="Skelton J."/>
            <person name="Squares R."/>
            <person name="Squares S."/>
            <person name="Stevens K."/>
            <person name="Unwin L."/>
            <person name="Whitehead S."/>
            <person name="Barrell B.G."/>
            <person name="Maskell D.J."/>
        </authorList>
    </citation>
    <scope>NUCLEOTIDE SEQUENCE [LARGE SCALE GENOMIC DNA]</scope>
    <source>
        <strain>ATCC BAA-588 / NCTC 13252 / RB50</strain>
    </source>
</reference>
<proteinExistence type="inferred from homology"/>